<reference key="1">
    <citation type="submission" date="2008-02" db="EMBL/GenBank/DDBJ databases">
        <title>Complete sequence of Yersinia pseudotuberculosis YPIII.</title>
        <authorList>
            <consortium name="US DOE Joint Genome Institute"/>
            <person name="Copeland A."/>
            <person name="Lucas S."/>
            <person name="Lapidus A."/>
            <person name="Glavina del Rio T."/>
            <person name="Dalin E."/>
            <person name="Tice H."/>
            <person name="Bruce D."/>
            <person name="Goodwin L."/>
            <person name="Pitluck S."/>
            <person name="Munk A.C."/>
            <person name="Brettin T."/>
            <person name="Detter J.C."/>
            <person name="Han C."/>
            <person name="Tapia R."/>
            <person name="Schmutz J."/>
            <person name="Larimer F."/>
            <person name="Land M."/>
            <person name="Hauser L."/>
            <person name="Challacombe J.F."/>
            <person name="Green L."/>
            <person name="Lindler L.E."/>
            <person name="Nikolich M.P."/>
            <person name="Richardson P."/>
        </authorList>
    </citation>
    <scope>NUCLEOTIDE SEQUENCE [LARGE SCALE GENOMIC DNA]</scope>
    <source>
        <strain>YPIII</strain>
    </source>
</reference>
<name>NUON_YERPY</name>
<sequence length="487" mass="52347">MTITPQQLIAMLPLLIVGLTVVVVMLSIAWRRDHFINATLTVIGLNLALLSLYFVGQVGPMDVTPLMRVDGYSMFYTGLVIIASLATSTFAYPWLVGYPDNREEFYLLVLIAALGGILLASANHLASLFLGIELLTLPLFGLIGYAYRQKRSLEASIKYMLLSAAASSFLLFGMALLYAESGSLSFVGLGQSLSDSMVHQPLILAGLGMMIVGLGFKLSLVPFQLWTPDVYQGAPAPVSTFLATASKIAIFAVVMRLFMYAPAADSEAVRLVLSIIAVASILFGNLMAISQTNIKRLLGYSSIAHLGYLLIALVAVQTHELALPLETIGVYLAGYLFSSLGAFGVVSLMSSPYKGPDAESLFSYRGLFWHKPILSAVMTVMMLSLAGIPMTLGFIGKFFVVAMGVSANLWWLTGAVVLGSAIGLYYYLRVTVSLFLSPPQSLVRDTPSNWALTAGGVVVLISAILVLVLGIYPQPLITLVQMAQPLM</sequence>
<organism>
    <name type="scientific">Yersinia pseudotuberculosis serotype O:3 (strain YPIII)</name>
    <dbReference type="NCBI Taxonomy" id="502800"/>
    <lineage>
        <taxon>Bacteria</taxon>
        <taxon>Pseudomonadati</taxon>
        <taxon>Pseudomonadota</taxon>
        <taxon>Gammaproteobacteria</taxon>
        <taxon>Enterobacterales</taxon>
        <taxon>Yersiniaceae</taxon>
        <taxon>Yersinia</taxon>
    </lineage>
</organism>
<comment type="function">
    <text evidence="1">NDH-1 shuttles electrons from NADH, via FMN and iron-sulfur (Fe-S) centers, to quinones in the respiratory chain. The immediate electron acceptor for the enzyme in this species is believed to be ubiquinone. Couples the redox reaction to proton translocation (for every two electrons transferred, four hydrogen ions are translocated across the cytoplasmic membrane), and thus conserves the redox energy in a proton gradient.</text>
</comment>
<comment type="catalytic activity">
    <reaction evidence="1">
        <text>a quinone + NADH + 5 H(+)(in) = a quinol + NAD(+) + 4 H(+)(out)</text>
        <dbReference type="Rhea" id="RHEA:57888"/>
        <dbReference type="ChEBI" id="CHEBI:15378"/>
        <dbReference type="ChEBI" id="CHEBI:24646"/>
        <dbReference type="ChEBI" id="CHEBI:57540"/>
        <dbReference type="ChEBI" id="CHEBI:57945"/>
        <dbReference type="ChEBI" id="CHEBI:132124"/>
    </reaction>
</comment>
<comment type="subunit">
    <text evidence="1">NDH-1 is composed of 13 different subunits. Subunits NuoA, H, J, K, L, M, N constitute the membrane sector of the complex.</text>
</comment>
<comment type="subcellular location">
    <subcellularLocation>
        <location evidence="1">Cell inner membrane</location>
        <topology evidence="1">Multi-pass membrane protein</topology>
    </subcellularLocation>
</comment>
<comment type="similarity">
    <text evidence="1">Belongs to the complex I subunit 2 family.</text>
</comment>
<dbReference type="EC" id="7.1.1.-" evidence="1"/>
<dbReference type="EMBL" id="CP000950">
    <property type="protein sequence ID" value="ACA67865.1"/>
    <property type="molecule type" value="Genomic_DNA"/>
</dbReference>
<dbReference type="RefSeq" id="WP_002210268.1">
    <property type="nucleotide sequence ID" value="NZ_CP009792.1"/>
</dbReference>
<dbReference type="SMR" id="B1JGM5"/>
<dbReference type="GeneID" id="57976146"/>
<dbReference type="KEGG" id="ypy:YPK_1572"/>
<dbReference type="PATRIC" id="fig|502800.11.peg.2216"/>
<dbReference type="GO" id="GO:0005886">
    <property type="term" value="C:plasma membrane"/>
    <property type="evidence" value="ECO:0007669"/>
    <property type="project" value="UniProtKB-SubCell"/>
</dbReference>
<dbReference type="GO" id="GO:0008137">
    <property type="term" value="F:NADH dehydrogenase (ubiquinone) activity"/>
    <property type="evidence" value="ECO:0007669"/>
    <property type="project" value="InterPro"/>
</dbReference>
<dbReference type="GO" id="GO:0050136">
    <property type="term" value="F:NADH:ubiquinone reductase (non-electrogenic) activity"/>
    <property type="evidence" value="ECO:0007669"/>
    <property type="project" value="UniProtKB-UniRule"/>
</dbReference>
<dbReference type="GO" id="GO:0048038">
    <property type="term" value="F:quinone binding"/>
    <property type="evidence" value="ECO:0007669"/>
    <property type="project" value="UniProtKB-KW"/>
</dbReference>
<dbReference type="GO" id="GO:0042773">
    <property type="term" value="P:ATP synthesis coupled electron transport"/>
    <property type="evidence" value="ECO:0007669"/>
    <property type="project" value="InterPro"/>
</dbReference>
<dbReference type="HAMAP" id="MF_00445">
    <property type="entry name" value="NDH1_NuoN_1"/>
    <property type="match status" value="1"/>
</dbReference>
<dbReference type="InterPro" id="IPR010096">
    <property type="entry name" value="NADH-Q_OxRdtase_suN/2"/>
</dbReference>
<dbReference type="InterPro" id="IPR001750">
    <property type="entry name" value="ND/Mrp_TM"/>
</dbReference>
<dbReference type="NCBIfam" id="TIGR01770">
    <property type="entry name" value="NDH_I_N"/>
    <property type="match status" value="1"/>
</dbReference>
<dbReference type="NCBIfam" id="NF004439">
    <property type="entry name" value="PRK05777.1-1"/>
    <property type="match status" value="1"/>
</dbReference>
<dbReference type="PANTHER" id="PTHR22773">
    <property type="entry name" value="NADH DEHYDROGENASE"/>
    <property type="match status" value="1"/>
</dbReference>
<dbReference type="Pfam" id="PF00361">
    <property type="entry name" value="Proton_antipo_M"/>
    <property type="match status" value="1"/>
</dbReference>
<evidence type="ECO:0000255" key="1">
    <source>
        <dbReference type="HAMAP-Rule" id="MF_00445"/>
    </source>
</evidence>
<feature type="chain" id="PRO_1000145883" description="NADH-quinone oxidoreductase subunit N">
    <location>
        <begin position="1"/>
        <end position="487"/>
    </location>
</feature>
<feature type="transmembrane region" description="Helical" evidence="1">
    <location>
        <begin position="8"/>
        <end position="28"/>
    </location>
</feature>
<feature type="transmembrane region" description="Helical" evidence="1">
    <location>
        <begin position="35"/>
        <end position="55"/>
    </location>
</feature>
<feature type="transmembrane region" description="Helical" evidence="1">
    <location>
        <begin position="78"/>
        <end position="98"/>
    </location>
</feature>
<feature type="transmembrane region" description="Helical" evidence="1">
    <location>
        <begin position="104"/>
        <end position="124"/>
    </location>
</feature>
<feature type="transmembrane region" description="Helical" evidence="1">
    <location>
        <begin position="125"/>
        <end position="145"/>
    </location>
</feature>
<feature type="transmembrane region" description="Helical" evidence="1">
    <location>
        <begin position="159"/>
        <end position="179"/>
    </location>
</feature>
<feature type="transmembrane region" description="Helical" evidence="1">
    <location>
        <begin position="203"/>
        <end position="223"/>
    </location>
</feature>
<feature type="transmembrane region" description="Helical" evidence="1">
    <location>
        <begin position="235"/>
        <end position="255"/>
    </location>
</feature>
<feature type="transmembrane region" description="Helical" evidence="1">
    <location>
        <begin position="271"/>
        <end position="291"/>
    </location>
</feature>
<feature type="transmembrane region" description="Helical" evidence="1">
    <location>
        <begin position="297"/>
        <end position="317"/>
    </location>
</feature>
<feature type="transmembrane region" description="Helical" evidence="1">
    <location>
        <begin position="328"/>
        <end position="348"/>
    </location>
</feature>
<feature type="transmembrane region" description="Helical" evidence="1">
    <location>
        <begin position="376"/>
        <end position="396"/>
    </location>
</feature>
<feature type="transmembrane region" description="Helical" evidence="1">
    <location>
        <begin position="409"/>
        <end position="428"/>
    </location>
</feature>
<feature type="transmembrane region" description="Helical" evidence="1">
    <location>
        <begin position="451"/>
        <end position="471"/>
    </location>
</feature>
<protein>
    <recommendedName>
        <fullName evidence="1">NADH-quinone oxidoreductase subunit N</fullName>
        <ecNumber evidence="1">7.1.1.-</ecNumber>
    </recommendedName>
    <alternativeName>
        <fullName evidence="1">NADH dehydrogenase I subunit N</fullName>
    </alternativeName>
    <alternativeName>
        <fullName evidence="1">NDH-1 subunit N</fullName>
    </alternativeName>
</protein>
<keyword id="KW-0997">Cell inner membrane</keyword>
<keyword id="KW-1003">Cell membrane</keyword>
<keyword id="KW-0472">Membrane</keyword>
<keyword id="KW-0520">NAD</keyword>
<keyword id="KW-0874">Quinone</keyword>
<keyword id="KW-1278">Translocase</keyword>
<keyword id="KW-0812">Transmembrane</keyword>
<keyword id="KW-1133">Transmembrane helix</keyword>
<keyword id="KW-0813">Transport</keyword>
<keyword id="KW-0830">Ubiquinone</keyword>
<accession>B1JGM5</accession>
<gene>
    <name evidence="1" type="primary">nuoN</name>
    <name type="ordered locus">YPK_1572</name>
</gene>
<proteinExistence type="inferred from homology"/>